<feature type="chain" id="PRO_0000145538" description="Glyceraldehyde-3-phosphate dehydrogenase">
    <location>
        <begin position="1"/>
        <end position="336"/>
    </location>
</feature>
<feature type="active site" description="Nucleophile" evidence="2">
    <location>
        <position position="151"/>
    </location>
</feature>
<feature type="binding site" evidence="1">
    <location>
        <begin position="12"/>
        <end position="13"/>
    </location>
    <ligand>
        <name>NAD(+)</name>
        <dbReference type="ChEBI" id="CHEBI:57540"/>
    </ligand>
</feature>
<feature type="binding site" evidence="1">
    <location>
        <position position="34"/>
    </location>
    <ligand>
        <name>NAD(+)</name>
        <dbReference type="ChEBI" id="CHEBI:57540"/>
    </ligand>
</feature>
<feature type="binding site" evidence="1">
    <location>
        <position position="79"/>
    </location>
    <ligand>
        <name>NAD(+)</name>
        <dbReference type="ChEBI" id="CHEBI:57540"/>
    </ligand>
</feature>
<feature type="binding site" evidence="1">
    <location>
        <begin position="150"/>
        <end position="152"/>
    </location>
    <ligand>
        <name>D-glyceraldehyde 3-phosphate</name>
        <dbReference type="ChEBI" id="CHEBI:59776"/>
    </ligand>
</feature>
<feature type="binding site" evidence="1">
    <location>
        <position position="181"/>
    </location>
    <ligand>
        <name>D-glyceraldehyde 3-phosphate</name>
        <dbReference type="ChEBI" id="CHEBI:59776"/>
    </ligand>
</feature>
<feature type="binding site" evidence="1">
    <location>
        <begin position="210"/>
        <end position="211"/>
    </location>
    <ligand>
        <name>D-glyceraldehyde 3-phosphate</name>
        <dbReference type="ChEBI" id="CHEBI:59776"/>
    </ligand>
</feature>
<feature type="binding site" evidence="1">
    <location>
        <position position="233"/>
    </location>
    <ligand>
        <name>D-glyceraldehyde 3-phosphate</name>
        <dbReference type="ChEBI" id="CHEBI:59776"/>
    </ligand>
</feature>
<feature type="binding site" evidence="1">
    <location>
        <position position="315"/>
    </location>
    <ligand>
        <name>NAD(+)</name>
        <dbReference type="ChEBI" id="CHEBI:57540"/>
    </ligand>
</feature>
<feature type="site" description="Activates thiol group during catalysis" evidence="1">
    <location>
        <position position="178"/>
    </location>
</feature>
<gene>
    <name type="primary">gpdA</name>
    <name type="synonym">gpd</name>
</gene>
<name>G3P_ASPNG</name>
<dbReference type="EC" id="1.2.1.12"/>
<dbReference type="EMBL" id="X99652">
    <property type="protein sequence ID" value="CAA67966.1"/>
    <property type="molecule type" value="Genomic_DNA"/>
</dbReference>
<dbReference type="RefSeq" id="XP_001397496.1">
    <property type="nucleotide sequence ID" value="XM_001397459.3"/>
</dbReference>
<dbReference type="SMR" id="Q12552"/>
<dbReference type="PaxDb" id="5061-CADANGAP00012414"/>
<dbReference type="EnsemblFungi" id="CAK42800">
    <property type="protein sequence ID" value="CAK42800"/>
    <property type="gene ID" value="An16g01830"/>
</dbReference>
<dbReference type="GeneID" id="4988576"/>
<dbReference type="KEGG" id="ang:An16g01830"/>
<dbReference type="VEuPathDB" id="FungiDB:An16g01830"/>
<dbReference type="VEuPathDB" id="FungiDB:ASPNIDRAFT2_1145517"/>
<dbReference type="VEuPathDB" id="FungiDB:ATCC64974_72940"/>
<dbReference type="VEuPathDB" id="FungiDB:M747DRAFT_297337"/>
<dbReference type="eggNOG" id="KOG0657">
    <property type="taxonomic scope" value="Eukaryota"/>
</dbReference>
<dbReference type="OrthoDB" id="1152826at2759"/>
<dbReference type="UniPathway" id="UPA00109">
    <property type="reaction ID" value="UER00184"/>
</dbReference>
<dbReference type="GO" id="GO:0005829">
    <property type="term" value="C:cytosol"/>
    <property type="evidence" value="ECO:0007669"/>
    <property type="project" value="TreeGrafter"/>
</dbReference>
<dbReference type="GO" id="GO:0005576">
    <property type="term" value="C:extracellular region"/>
    <property type="evidence" value="ECO:0000314"/>
    <property type="project" value="AspGD"/>
</dbReference>
<dbReference type="GO" id="GO:0016020">
    <property type="term" value="C:membrane"/>
    <property type="evidence" value="ECO:0000314"/>
    <property type="project" value="AspGD"/>
</dbReference>
<dbReference type="GO" id="GO:0004365">
    <property type="term" value="F:glyceraldehyde-3-phosphate dehydrogenase (NAD+) (phosphorylating) activity"/>
    <property type="evidence" value="ECO:0007669"/>
    <property type="project" value="UniProtKB-EC"/>
</dbReference>
<dbReference type="GO" id="GO:0051287">
    <property type="term" value="F:NAD binding"/>
    <property type="evidence" value="ECO:0007669"/>
    <property type="project" value="InterPro"/>
</dbReference>
<dbReference type="GO" id="GO:0050661">
    <property type="term" value="F:NADP binding"/>
    <property type="evidence" value="ECO:0007669"/>
    <property type="project" value="InterPro"/>
</dbReference>
<dbReference type="GO" id="GO:0006006">
    <property type="term" value="P:glucose metabolic process"/>
    <property type="evidence" value="ECO:0007669"/>
    <property type="project" value="InterPro"/>
</dbReference>
<dbReference type="GO" id="GO:0006096">
    <property type="term" value="P:glycolytic process"/>
    <property type="evidence" value="ECO:0007669"/>
    <property type="project" value="UniProtKB-UniPathway"/>
</dbReference>
<dbReference type="CDD" id="cd18126">
    <property type="entry name" value="GAPDH_I_C"/>
    <property type="match status" value="1"/>
</dbReference>
<dbReference type="CDD" id="cd05214">
    <property type="entry name" value="GAPDH_I_N"/>
    <property type="match status" value="1"/>
</dbReference>
<dbReference type="FunFam" id="3.30.360.10:FF:000001">
    <property type="entry name" value="Glyceraldehyde-3-phosphate dehydrogenase"/>
    <property type="match status" value="1"/>
</dbReference>
<dbReference type="FunFam" id="3.40.50.720:FF:000020">
    <property type="entry name" value="Glyceraldehyde-3-phosphate dehydrogenase"/>
    <property type="match status" value="1"/>
</dbReference>
<dbReference type="Gene3D" id="3.30.360.10">
    <property type="entry name" value="Dihydrodipicolinate Reductase, domain 2"/>
    <property type="match status" value="1"/>
</dbReference>
<dbReference type="Gene3D" id="3.40.50.720">
    <property type="entry name" value="NAD(P)-binding Rossmann-like Domain"/>
    <property type="match status" value="1"/>
</dbReference>
<dbReference type="InterPro" id="IPR020831">
    <property type="entry name" value="GlycerAld/Erythrose_P_DH"/>
</dbReference>
<dbReference type="InterPro" id="IPR020830">
    <property type="entry name" value="GlycerAld_3-P_DH_AS"/>
</dbReference>
<dbReference type="InterPro" id="IPR020829">
    <property type="entry name" value="GlycerAld_3-P_DH_cat"/>
</dbReference>
<dbReference type="InterPro" id="IPR020828">
    <property type="entry name" value="GlycerAld_3-P_DH_NAD(P)-bd"/>
</dbReference>
<dbReference type="InterPro" id="IPR006424">
    <property type="entry name" value="Glyceraldehyde-3-P_DH_1"/>
</dbReference>
<dbReference type="InterPro" id="IPR036291">
    <property type="entry name" value="NAD(P)-bd_dom_sf"/>
</dbReference>
<dbReference type="NCBIfam" id="TIGR01534">
    <property type="entry name" value="GAPDH-I"/>
    <property type="match status" value="1"/>
</dbReference>
<dbReference type="PANTHER" id="PTHR10836">
    <property type="entry name" value="GLYCERALDEHYDE 3-PHOSPHATE DEHYDROGENASE"/>
    <property type="match status" value="1"/>
</dbReference>
<dbReference type="PANTHER" id="PTHR10836:SF76">
    <property type="entry name" value="GLYCERALDEHYDE-3-PHOSPHATE DEHYDROGENASE-RELATED"/>
    <property type="match status" value="1"/>
</dbReference>
<dbReference type="Pfam" id="PF02800">
    <property type="entry name" value="Gp_dh_C"/>
    <property type="match status" value="1"/>
</dbReference>
<dbReference type="Pfam" id="PF00044">
    <property type="entry name" value="Gp_dh_N"/>
    <property type="match status" value="1"/>
</dbReference>
<dbReference type="PIRSF" id="PIRSF000149">
    <property type="entry name" value="GAP_DH"/>
    <property type="match status" value="1"/>
</dbReference>
<dbReference type="PRINTS" id="PR00078">
    <property type="entry name" value="G3PDHDRGNASE"/>
</dbReference>
<dbReference type="SMART" id="SM00846">
    <property type="entry name" value="Gp_dh_N"/>
    <property type="match status" value="1"/>
</dbReference>
<dbReference type="SUPFAM" id="SSF55347">
    <property type="entry name" value="Glyceraldehyde-3-phosphate dehydrogenase-like, C-terminal domain"/>
    <property type="match status" value="1"/>
</dbReference>
<dbReference type="SUPFAM" id="SSF51735">
    <property type="entry name" value="NAD(P)-binding Rossmann-fold domains"/>
    <property type="match status" value="1"/>
</dbReference>
<dbReference type="PROSITE" id="PS00071">
    <property type="entry name" value="GAPDH"/>
    <property type="match status" value="1"/>
</dbReference>
<proteinExistence type="inferred from homology"/>
<comment type="catalytic activity">
    <reaction evidence="2">
        <text>D-glyceraldehyde 3-phosphate + phosphate + NAD(+) = (2R)-3-phospho-glyceroyl phosphate + NADH + H(+)</text>
        <dbReference type="Rhea" id="RHEA:10300"/>
        <dbReference type="ChEBI" id="CHEBI:15378"/>
        <dbReference type="ChEBI" id="CHEBI:43474"/>
        <dbReference type="ChEBI" id="CHEBI:57540"/>
        <dbReference type="ChEBI" id="CHEBI:57604"/>
        <dbReference type="ChEBI" id="CHEBI:57945"/>
        <dbReference type="ChEBI" id="CHEBI:59776"/>
        <dbReference type="EC" id="1.2.1.12"/>
    </reaction>
</comment>
<comment type="pathway">
    <text>Carbohydrate degradation; glycolysis; pyruvate from D-glyceraldehyde 3-phosphate: step 1/5.</text>
</comment>
<comment type="subunit">
    <text evidence="1">Homotetramer.</text>
</comment>
<comment type="subcellular location">
    <subcellularLocation>
        <location>Cytoplasm</location>
    </subcellularLocation>
</comment>
<comment type="similarity">
    <text evidence="3">Belongs to the glyceraldehyde-3-phosphate dehydrogenase family.</text>
</comment>
<keyword id="KW-0963">Cytoplasm</keyword>
<keyword id="KW-0324">Glycolysis</keyword>
<keyword id="KW-0520">NAD</keyword>
<keyword id="KW-0560">Oxidoreductase</keyword>
<organism>
    <name type="scientific">Aspergillus niger</name>
    <dbReference type="NCBI Taxonomy" id="5061"/>
    <lineage>
        <taxon>Eukaryota</taxon>
        <taxon>Fungi</taxon>
        <taxon>Dikarya</taxon>
        <taxon>Ascomycota</taxon>
        <taxon>Pezizomycotina</taxon>
        <taxon>Eurotiomycetes</taxon>
        <taxon>Eurotiomycetidae</taxon>
        <taxon>Eurotiales</taxon>
        <taxon>Aspergillaceae</taxon>
        <taxon>Aspergillus</taxon>
        <taxon>Aspergillus subgen. Circumdati</taxon>
    </lineage>
</organism>
<evidence type="ECO:0000250" key="1"/>
<evidence type="ECO:0000255" key="2">
    <source>
        <dbReference type="PROSITE-ProRule" id="PRU10009"/>
    </source>
</evidence>
<evidence type="ECO:0000305" key="3"/>
<reference key="1">
    <citation type="submission" date="1996-08" db="EMBL/GenBank/DDBJ databases">
        <authorList>
            <person name="van Gorcom R.F.M."/>
            <person name="Punt P.J."/>
        </authorList>
    </citation>
    <scope>NUCLEOTIDE SEQUENCE [GENOMIC DNA]</scope>
    <source>
        <strain>ATCC 9089 / N402</strain>
    </source>
</reference>
<protein>
    <recommendedName>
        <fullName>Glyceraldehyde-3-phosphate dehydrogenase</fullName>
        <shortName>GAPDH</shortName>
        <ecNumber>1.2.1.12</ecNumber>
    </recommendedName>
</protein>
<sequence>MAPKVGINGFGRIGRIVFRNAINHGEVDVVAVNDPFIETHYAAYMLKYDSTHGQFKGTIETYEEGLIVNGKKIRFFAERDPAAIPWGTTGADYIVESTGVFTTQEKAAAHLKGGAKKVVISAPSADAPMFVMGVNNTSYTKDINVLSNASCTTNCLAPLAKVINDKFGIVEGLMTTVHSYTATQKVVDAPSSKDWRGGRTAAQNIIPSSTGAAKAVGKVIPTLNGKLTGMAMRVPTSNVSVVDLTCRLEKATSYDEIKKALKDASENELKGILGYTEDDIVSSDLNGDDHSSIFDAKAGIALNSNFVKLVSWYDNEWGYSRRVVDLIAYISKVDAQ</sequence>
<accession>Q12552</accession>